<name>MDTK_ECO8A</name>
<sequence>MQKYISEARLLLALAIPVILAQIAQTAMGFVDTVMAGGYSATDMAAVAIGTSIWLPAILFGHGLLLALTPVIAQLNGSGRRERIAHQVRQGFWLAGFVSVLIMLVLWNAGYIIRSMENIDPALADKAVGYLRALLWGAPGYLFFQVARNQCEGLAKTKPGMVMGFIGLLVNIPVNYIFIYGHFGMPELGGVGCGVATAAVYWVMFLAMVSYIKRARSMRDIRNEKGTAKPDPAVMKRLIQLGLPIALALFFEVTLFAVVALLVSPLGIVDVAGHQIALNFSSLMFVLPMSLAAAVTIRVGYRLGQGSTLDAQTAARTGLMVGVCMATLTAIFTVSLREQIALLYNDNPEVVTLAAHLMLLAAVYQISDSIQVIGSGILRGYKDTRSIFYITFTAYWVLGLPSGYILALTDLVVEPMGPAGFWIGFIIGLTSAAIMMMLRMRFLQRLPSVIILQRASR</sequence>
<evidence type="ECO:0000255" key="1">
    <source>
        <dbReference type="HAMAP-Rule" id="MF_00400"/>
    </source>
</evidence>
<proteinExistence type="inferred from homology"/>
<organism>
    <name type="scientific">Escherichia coli O8 (strain IAI1)</name>
    <dbReference type="NCBI Taxonomy" id="585034"/>
    <lineage>
        <taxon>Bacteria</taxon>
        <taxon>Pseudomonadati</taxon>
        <taxon>Pseudomonadota</taxon>
        <taxon>Gammaproteobacteria</taxon>
        <taxon>Enterobacterales</taxon>
        <taxon>Enterobacteriaceae</taxon>
        <taxon>Escherichia</taxon>
    </lineage>
</organism>
<gene>
    <name evidence="1" type="primary">mdtK</name>
    <name type="ordered locus">ECIAI1_1715</name>
</gene>
<reference key="1">
    <citation type="journal article" date="2009" name="PLoS Genet.">
        <title>Organised genome dynamics in the Escherichia coli species results in highly diverse adaptive paths.</title>
        <authorList>
            <person name="Touchon M."/>
            <person name="Hoede C."/>
            <person name="Tenaillon O."/>
            <person name="Barbe V."/>
            <person name="Baeriswyl S."/>
            <person name="Bidet P."/>
            <person name="Bingen E."/>
            <person name="Bonacorsi S."/>
            <person name="Bouchier C."/>
            <person name="Bouvet O."/>
            <person name="Calteau A."/>
            <person name="Chiapello H."/>
            <person name="Clermont O."/>
            <person name="Cruveiller S."/>
            <person name="Danchin A."/>
            <person name="Diard M."/>
            <person name="Dossat C."/>
            <person name="Karoui M.E."/>
            <person name="Frapy E."/>
            <person name="Garry L."/>
            <person name="Ghigo J.M."/>
            <person name="Gilles A.M."/>
            <person name="Johnson J."/>
            <person name="Le Bouguenec C."/>
            <person name="Lescat M."/>
            <person name="Mangenot S."/>
            <person name="Martinez-Jehanne V."/>
            <person name="Matic I."/>
            <person name="Nassif X."/>
            <person name="Oztas S."/>
            <person name="Petit M.A."/>
            <person name="Pichon C."/>
            <person name="Rouy Z."/>
            <person name="Ruf C.S."/>
            <person name="Schneider D."/>
            <person name="Tourret J."/>
            <person name="Vacherie B."/>
            <person name="Vallenet D."/>
            <person name="Medigue C."/>
            <person name="Rocha E.P.C."/>
            <person name="Denamur E."/>
        </authorList>
    </citation>
    <scope>NUCLEOTIDE SEQUENCE [LARGE SCALE GENOMIC DNA]</scope>
    <source>
        <strain>IAI1</strain>
    </source>
</reference>
<dbReference type="EMBL" id="CU928160">
    <property type="protein sequence ID" value="CAQ98572.1"/>
    <property type="molecule type" value="Genomic_DNA"/>
</dbReference>
<dbReference type="RefSeq" id="WP_001174942.1">
    <property type="nucleotide sequence ID" value="NC_011741.1"/>
</dbReference>
<dbReference type="SMR" id="B7M0M0"/>
<dbReference type="GeneID" id="75204509"/>
<dbReference type="KEGG" id="ecr:ECIAI1_1715"/>
<dbReference type="HOGENOM" id="CLU_012893_6_0_6"/>
<dbReference type="GO" id="GO:0005886">
    <property type="term" value="C:plasma membrane"/>
    <property type="evidence" value="ECO:0007669"/>
    <property type="project" value="UniProtKB-SubCell"/>
</dbReference>
<dbReference type="GO" id="GO:0015297">
    <property type="term" value="F:antiporter activity"/>
    <property type="evidence" value="ECO:0007669"/>
    <property type="project" value="UniProtKB-UniRule"/>
</dbReference>
<dbReference type="GO" id="GO:0042910">
    <property type="term" value="F:xenobiotic transmembrane transporter activity"/>
    <property type="evidence" value="ECO:0007669"/>
    <property type="project" value="UniProtKB-UniRule"/>
</dbReference>
<dbReference type="GO" id="GO:0006814">
    <property type="term" value="P:sodium ion transport"/>
    <property type="evidence" value="ECO:0007669"/>
    <property type="project" value="UniProtKB-UniRule"/>
</dbReference>
<dbReference type="GO" id="GO:0006855">
    <property type="term" value="P:xenobiotic transmembrane transport"/>
    <property type="evidence" value="ECO:0007669"/>
    <property type="project" value="UniProtKB-UniRule"/>
</dbReference>
<dbReference type="CDD" id="cd13131">
    <property type="entry name" value="MATE_NorM_like"/>
    <property type="match status" value="1"/>
</dbReference>
<dbReference type="HAMAP" id="MF_00400">
    <property type="entry name" value="MdtK"/>
    <property type="match status" value="1"/>
</dbReference>
<dbReference type="InterPro" id="IPR002528">
    <property type="entry name" value="MATE_fam"/>
</dbReference>
<dbReference type="InterPro" id="IPR050222">
    <property type="entry name" value="MATE_MdtK"/>
</dbReference>
<dbReference type="InterPro" id="IPR048279">
    <property type="entry name" value="MdtK-like"/>
</dbReference>
<dbReference type="InterPro" id="IPR022913">
    <property type="entry name" value="Multidrug-R_MdtK"/>
</dbReference>
<dbReference type="NCBIfam" id="TIGR00797">
    <property type="entry name" value="matE"/>
    <property type="match status" value="1"/>
</dbReference>
<dbReference type="PANTHER" id="PTHR43298:SF2">
    <property type="entry name" value="FMN_FAD EXPORTER YEEO-RELATED"/>
    <property type="match status" value="1"/>
</dbReference>
<dbReference type="PANTHER" id="PTHR43298">
    <property type="entry name" value="MULTIDRUG RESISTANCE PROTEIN NORM-RELATED"/>
    <property type="match status" value="1"/>
</dbReference>
<dbReference type="Pfam" id="PF01554">
    <property type="entry name" value="MatE"/>
    <property type="match status" value="2"/>
</dbReference>
<dbReference type="PIRSF" id="PIRSF006603">
    <property type="entry name" value="DinF"/>
    <property type="match status" value="1"/>
</dbReference>
<keyword id="KW-0050">Antiport</keyword>
<keyword id="KW-0997">Cell inner membrane</keyword>
<keyword id="KW-1003">Cell membrane</keyword>
<keyword id="KW-0406">Ion transport</keyword>
<keyword id="KW-0472">Membrane</keyword>
<keyword id="KW-0915">Sodium</keyword>
<keyword id="KW-0739">Sodium transport</keyword>
<keyword id="KW-0812">Transmembrane</keyword>
<keyword id="KW-1133">Transmembrane helix</keyword>
<keyword id="KW-0813">Transport</keyword>
<comment type="function">
    <text evidence="1">Multidrug efflux pump that functions probably as a Na(+)/drug antiporter.</text>
</comment>
<comment type="subcellular location">
    <subcellularLocation>
        <location evidence="1">Cell inner membrane</location>
        <topology evidence="1">Multi-pass membrane protein</topology>
    </subcellularLocation>
</comment>
<comment type="similarity">
    <text evidence="1">Belongs to the multi antimicrobial extrusion (MATE) (TC 2.A.66.1) family. MdtK subfamily.</text>
</comment>
<protein>
    <recommendedName>
        <fullName evidence="1">Multidrug resistance protein MdtK</fullName>
    </recommendedName>
    <alternativeName>
        <fullName evidence="1">Multidrug-efflux transporter</fullName>
    </alternativeName>
</protein>
<feature type="chain" id="PRO_1000191096" description="Multidrug resistance protein MdtK">
    <location>
        <begin position="1"/>
        <end position="457"/>
    </location>
</feature>
<feature type="transmembrane region" description="Helical" evidence="1">
    <location>
        <begin position="11"/>
        <end position="31"/>
    </location>
</feature>
<feature type="transmembrane region" description="Helical" evidence="1">
    <location>
        <begin position="53"/>
        <end position="73"/>
    </location>
</feature>
<feature type="transmembrane region" description="Helical" evidence="1">
    <location>
        <begin position="93"/>
        <end position="113"/>
    </location>
</feature>
<feature type="transmembrane region" description="Helical" evidence="1">
    <location>
        <begin position="127"/>
        <end position="147"/>
    </location>
</feature>
<feature type="transmembrane region" description="Helical" evidence="1">
    <location>
        <begin position="160"/>
        <end position="180"/>
    </location>
</feature>
<feature type="transmembrane region" description="Helical" evidence="1">
    <location>
        <begin position="189"/>
        <end position="209"/>
    </location>
</feature>
<feature type="transmembrane region" description="Helical" evidence="1">
    <location>
        <begin position="243"/>
        <end position="263"/>
    </location>
</feature>
<feature type="transmembrane region" description="Helical" evidence="1">
    <location>
        <begin position="276"/>
        <end position="296"/>
    </location>
</feature>
<feature type="transmembrane region" description="Helical" evidence="1">
    <location>
        <begin position="314"/>
        <end position="334"/>
    </location>
</feature>
<feature type="transmembrane region" description="Helical" evidence="1">
    <location>
        <begin position="350"/>
        <end position="370"/>
    </location>
</feature>
<feature type="transmembrane region" description="Helical" evidence="1">
    <location>
        <begin position="387"/>
        <end position="407"/>
    </location>
</feature>
<feature type="transmembrane region" description="Helical" evidence="1">
    <location>
        <begin position="418"/>
        <end position="438"/>
    </location>
</feature>
<accession>B7M0M0</accession>